<comment type="function">
    <text evidence="1">Binds as a heterodimer with protein bS6 to the central domain of the 16S rRNA, where it helps stabilize the platform of the 30S subunit.</text>
</comment>
<comment type="subunit">
    <text evidence="1">Part of the 30S ribosomal subunit. Forms a tight heterodimer with protein bS6.</text>
</comment>
<comment type="similarity">
    <text evidence="1">Belongs to the bacterial ribosomal protein bS18 family.</text>
</comment>
<accession>Q74FE3</accession>
<feature type="chain" id="PRO_0000111159" description="Small ribosomal subunit protein bS18">
    <location>
        <begin position="1"/>
        <end position="103"/>
    </location>
</feature>
<feature type="region of interest" description="Disordered" evidence="2">
    <location>
        <begin position="1"/>
        <end position="33"/>
    </location>
</feature>
<feature type="compositionally biased region" description="Basic and acidic residues" evidence="2">
    <location>
        <begin position="1"/>
        <end position="19"/>
    </location>
</feature>
<feature type="compositionally biased region" description="Basic residues" evidence="2">
    <location>
        <begin position="24"/>
        <end position="33"/>
    </location>
</feature>
<sequence>MSEERTERPERTERPERPQQRGSGPRKRRPFQRRKVCRFCADKTLVIDYKDPRVLRSFITERGKIVPRRISGNCSAHQREITEAIKRARNIALIPIASTHVIA</sequence>
<protein>
    <recommendedName>
        <fullName evidence="1">Small ribosomal subunit protein bS18</fullName>
    </recommendedName>
    <alternativeName>
        <fullName evidence="3">30S ribosomal protein S18</fullName>
    </alternativeName>
</protein>
<reference key="1">
    <citation type="journal article" date="2003" name="Science">
        <title>Genome of Geobacter sulfurreducens: metal reduction in subsurface environments.</title>
        <authorList>
            <person name="Methe B.A."/>
            <person name="Nelson K.E."/>
            <person name="Eisen J.A."/>
            <person name="Paulsen I.T."/>
            <person name="Nelson W.C."/>
            <person name="Heidelberg J.F."/>
            <person name="Wu D."/>
            <person name="Wu M."/>
            <person name="Ward N.L."/>
            <person name="Beanan M.J."/>
            <person name="Dodson R.J."/>
            <person name="Madupu R."/>
            <person name="Brinkac L.M."/>
            <person name="Daugherty S.C."/>
            <person name="DeBoy R.T."/>
            <person name="Durkin A.S."/>
            <person name="Gwinn M.L."/>
            <person name="Kolonay J.F."/>
            <person name="Sullivan S.A."/>
            <person name="Haft D.H."/>
            <person name="Selengut J."/>
            <person name="Davidsen T.M."/>
            <person name="Zafar N."/>
            <person name="White O."/>
            <person name="Tran B."/>
            <person name="Romero C."/>
            <person name="Forberger H.A."/>
            <person name="Weidman J.F."/>
            <person name="Khouri H.M."/>
            <person name="Feldblyum T.V."/>
            <person name="Utterback T.R."/>
            <person name="Van Aken S.E."/>
            <person name="Lovley D.R."/>
            <person name="Fraser C.M."/>
        </authorList>
    </citation>
    <scope>NUCLEOTIDE SEQUENCE [LARGE SCALE GENOMIC DNA]</scope>
    <source>
        <strain>ATCC 51573 / DSM 12127 / PCA</strain>
    </source>
</reference>
<name>RS18_GEOSL</name>
<evidence type="ECO:0000255" key="1">
    <source>
        <dbReference type="HAMAP-Rule" id="MF_00270"/>
    </source>
</evidence>
<evidence type="ECO:0000256" key="2">
    <source>
        <dbReference type="SAM" id="MobiDB-lite"/>
    </source>
</evidence>
<evidence type="ECO:0000305" key="3"/>
<gene>
    <name evidence="1" type="primary">rpsR</name>
    <name type="ordered locus">GSU0666</name>
</gene>
<proteinExistence type="inferred from homology"/>
<dbReference type="EMBL" id="AE017180">
    <property type="protein sequence ID" value="AAR33996.1"/>
    <property type="molecule type" value="Genomic_DNA"/>
</dbReference>
<dbReference type="RefSeq" id="NP_951723.1">
    <property type="nucleotide sequence ID" value="NC_002939.5"/>
</dbReference>
<dbReference type="RefSeq" id="WP_010941327.1">
    <property type="nucleotide sequence ID" value="NC_002939.5"/>
</dbReference>
<dbReference type="SMR" id="Q74FE3"/>
<dbReference type="FunCoup" id="Q74FE3">
    <property type="interactions" value="662"/>
</dbReference>
<dbReference type="STRING" id="243231.GSU0666"/>
<dbReference type="EnsemblBacteria" id="AAR33996">
    <property type="protein sequence ID" value="AAR33996"/>
    <property type="gene ID" value="GSU0666"/>
</dbReference>
<dbReference type="KEGG" id="gsu:GSU0666"/>
<dbReference type="PATRIC" id="fig|243231.5.peg.662"/>
<dbReference type="eggNOG" id="COG0238">
    <property type="taxonomic scope" value="Bacteria"/>
</dbReference>
<dbReference type="HOGENOM" id="CLU_148710_2_2_7"/>
<dbReference type="InParanoid" id="Q74FE3"/>
<dbReference type="OrthoDB" id="9812008at2"/>
<dbReference type="Proteomes" id="UP000000577">
    <property type="component" value="Chromosome"/>
</dbReference>
<dbReference type="GO" id="GO:0022627">
    <property type="term" value="C:cytosolic small ribosomal subunit"/>
    <property type="evidence" value="ECO:0000318"/>
    <property type="project" value="GO_Central"/>
</dbReference>
<dbReference type="GO" id="GO:0070181">
    <property type="term" value="F:small ribosomal subunit rRNA binding"/>
    <property type="evidence" value="ECO:0000318"/>
    <property type="project" value="GO_Central"/>
</dbReference>
<dbReference type="GO" id="GO:0003735">
    <property type="term" value="F:structural constituent of ribosome"/>
    <property type="evidence" value="ECO:0000318"/>
    <property type="project" value="GO_Central"/>
</dbReference>
<dbReference type="GO" id="GO:0006412">
    <property type="term" value="P:translation"/>
    <property type="evidence" value="ECO:0000318"/>
    <property type="project" value="GO_Central"/>
</dbReference>
<dbReference type="FunFam" id="4.10.640.10:FF:000004">
    <property type="entry name" value="30S ribosomal protein S18"/>
    <property type="match status" value="1"/>
</dbReference>
<dbReference type="Gene3D" id="4.10.640.10">
    <property type="entry name" value="Ribosomal protein S18"/>
    <property type="match status" value="1"/>
</dbReference>
<dbReference type="HAMAP" id="MF_00270">
    <property type="entry name" value="Ribosomal_bS18"/>
    <property type="match status" value="1"/>
</dbReference>
<dbReference type="InterPro" id="IPR001648">
    <property type="entry name" value="Ribosomal_bS18"/>
</dbReference>
<dbReference type="InterPro" id="IPR018275">
    <property type="entry name" value="Ribosomal_bS18_CS"/>
</dbReference>
<dbReference type="InterPro" id="IPR036870">
    <property type="entry name" value="Ribosomal_bS18_sf"/>
</dbReference>
<dbReference type="NCBIfam" id="TIGR00165">
    <property type="entry name" value="S18"/>
    <property type="match status" value="1"/>
</dbReference>
<dbReference type="PANTHER" id="PTHR13479">
    <property type="entry name" value="30S RIBOSOMAL PROTEIN S18"/>
    <property type="match status" value="1"/>
</dbReference>
<dbReference type="PANTHER" id="PTHR13479:SF40">
    <property type="entry name" value="SMALL RIBOSOMAL SUBUNIT PROTEIN BS18M"/>
    <property type="match status" value="1"/>
</dbReference>
<dbReference type="Pfam" id="PF01084">
    <property type="entry name" value="Ribosomal_S18"/>
    <property type="match status" value="1"/>
</dbReference>
<dbReference type="PRINTS" id="PR00974">
    <property type="entry name" value="RIBOSOMALS18"/>
</dbReference>
<dbReference type="SUPFAM" id="SSF46911">
    <property type="entry name" value="Ribosomal protein S18"/>
    <property type="match status" value="1"/>
</dbReference>
<dbReference type="PROSITE" id="PS00057">
    <property type="entry name" value="RIBOSOMAL_S18"/>
    <property type="match status" value="1"/>
</dbReference>
<keyword id="KW-1185">Reference proteome</keyword>
<keyword id="KW-0687">Ribonucleoprotein</keyword>
<keyword id="KW-0689">Ribosomal protein</keyword>
<keyword id="KW-0694">RNA-binding</keyword>
<keyword id="KW-0699">rRNA-binding</keyword>
<organism>
    <name type="scientific">Geobacter sulfurreducens (strain ATCC 51573 / DSM 12127 / PCA)</name>
    <dbReference type="NCBI Taxonomy" id="243231"/>
    <lineage>
        <taxon>Bacteria</taxon>
        <taxon>Pseudomonadati</taxon>
        <taxon>Thermodesulfobacteriota</taxon>
        <taxon>Desulfuromonadia</taxon>
        <taxon>Geobacterales</taxon>
        <taxon>Geobacteraceae</taxon>
        <taxon>Geobacter</taxon>
    </lineage>
</organism>